<protein>
    <recommendedName>
        <fullName evidence="1">Adenine deaminase 1</fullName>
        <shortName evidence="1">Adenase 1</shortName>
        <shortName evidence="1">Adenine aminase 1</shortName>
        <ecNumber evidence="1">3.5.4.2</ecNumber>
    </recommendedName>
</protein>
<reference key="1">
    <citation type="journal article" date="2006" name="Proc. Natl. Acad. Sci. U.S.A.">
        <title>The partitioned Rhizobium etli genome: genetic and metabolic redundancy in seven interacting replicons.</title>
        <authorList>
            <person name="Gonzalez V."/>
            <person name="Santamaria R.I."/>
            <person name="Bustos P."/>
            <person name="Hernandez-Gonzalez I."/>
            <person name="Medrano-Soto A."/>
            <person name="Moreno-Hagelsieb G."/>
            <person name="Janga S.C."/>
            <person name="Ramirez M.A."/>
            <person name="Jimenez-Jacinto V."/>
            <person name="Collado-Vides J."/>
            <person name="Davila G."/>
        </authorList>
    </citation>
    <scope>NUCLEOTIDE SEQUENCE [LARGE SCALE GENOMIC DNA]</scope>
    <source>
        <strain>ATCC 51251 / DSM 11541 / JCM 21823 / NBRC 15573 / CFN 42</strain>
    </source>
</reference>
<proteinExistence type="inferred from homology"/>
<accession>Q2K5M6</accession>
<organism>
    <name type="scientific">Rhizobium etli (strain ATCC 51251 / DSM 11541 / JCM 21823 / NBRC 15573 / CFN 42)</name>
    <dbReference type="NCBI Taxonomy" id="347834"/>
    <lineage>
        <taxon>Bacteria</taxon>
        <taxon>Pseudomonadati</taxon>
        <taxon>Pseudomonadota</taxon>
        <taxon>Alphaproteobacteria</taxon>
        <taxon>Hyphomicrobiales</taxon>
        <taxon>Rhizobiaceae</taxon>
        <taxon>Rhizobium/Agrobacterium group</taxon>
        <taxon>Rhizobium</taxon>
    </lineage>
</organism>
<evidence type="ECO:0000255" key="1">
    <source>
        <dbReference type="HAMAP-Rule" id="MF_01518"/>
    </source>
</evidence>
<dbReference type="EC" id="3.5.4.2" evidence="1"/>
<dbReference type="EMBL" id="CP000133">
    <property type="protein sequence ID" value="ABC91860.1"/>
    <property type="molecule type" value="Genomic_DNA"/>
</dbReference>
<dbReference type="RefSeq" id="WP_011426330.1">
    <property type="nucleotide sequence ID" value="NC_007761.1"/>
</dbReference>
<dbReference type="SMR" id="Q2K5M6"/>
<dbReference type="KEGG" id="ret:RHE_CH03094"/>
<dbReference type="eggNOG" id="COG1001">
    <property type="taxonomic scope" value="Bacteria"/>
</dbReference>
<dbReference type="HOGENOM" id="CLU_027935_0_0_5"/>
<dbReference type="OrthoDB" id="9775607at2"/>
<dbReference type="Proteomes" id="UP000001936">
    <property type="component" value="Chromosome"/>
</dbReference>
<dbReference type="GO" id="GO:0000034">
    <property type="term" value="F:adenine deaminase activity"/>
    <property type="evidence" value="ECO:0007669"/>
    <property type="project" value="UniProtKB-UniRule"/>
</dbReference>
<dbReference type="GO" id="GO:0006146">
    <property type="term" value="P:adenine catabolic process"/>
    <property type="evidence" value="ECO:0007669"/>
    <property type="project" value="InterPro"/>
</dbReference>
<dbReference type="CDD" id="cd01295">
    <property type="entry name" value="AdeC"/>
    <property type="match status" value="1"/>
</dbReference>
<dbReference type="Gene3D" id="3.20.20.140">
    <property type="entry name" value="Metal-dependent hydrolases"/>
    <property type="match status" value="1"/>
</dbReference>
<dbReference type="Gene3D" id="2.30.40.10">
    <property type="entry name" value="Urease, subunit C, domain 1"/>
    <property type="match status" value="1"/>
</dbReference>
<dbReference type="HAMAP" id="MF_01518">
    <property type="entry name" value="Adenine_deamin"/>
    <property type="match status" value="1"/>
</dbReference>
<dbReference type="InterPro" id="IPR006679">
    <property type="entry name" value="Adenine_deam"/>
</dbReference>
<dbReference type="InterPro" id="IPR026912">
    <property type="entry name" value="Adenine_deam_C"/>
</dbReference>
<dbReference type="InterPro" id="IPR006680">
    <property type="entry name" value="Amidohydro-rel"/>
</dbReference>
<dbReference type="InterPro" id="IPR011059">
    <property type="entry name" value="Metal-dep_hydrolase_composite"/>
</dbReference>
<dbReference type="InterPro" id="IPR032466">
    <property type="entry name" value="Metal_Hydrolase"/>
</dbReference>
<dbReference type="NCBIfam" id="TIGR01178">
    <property type="entry name" value="ade"/>
    <property type="match status" value="1"/>
</dbReference>
<dbReference type="PANTHER" id="PTHR11113:SF2">
    <property type="entry name" value="ADENINE DEAMINASE"/>
    <property type="match status" value="1"/>
</dbReference>
<dbReference type="PANTHER" id="PTHR11113">
    <property type="entry name" value="N-ACETYLGLUCOSAMINE-6-PHOSPHATE DEACETYLASE"/>
    <property type="match status" value="1"/>
</dbReference>
<dbReference type="Pfam" id="PF13382">
    <property type="entry name" value="Adenine_deam_C"/>
    <property type="match status" value="1"/>
</dbReference>
<dbReference type="Pfam" id="PF01979">
    <property type="entry name" value="Amidohydro_1"/>
    <property type="match status" value="1"/>
</dbReference>
<dbReference type="SUPFAM" id="SSF51338">
    <property type="entry name" value="Composite domain of metallo-dependent hydrolases"/>
    <property type="match status" value="1"/>
</dbReference>
<dbReference type="SUPFAM" id="SSF51556">
    <property type="entry name" value="Metallo-dependent hydrolases"/>
    <property type="match status" value="1"/>
</dbReference>
<keyword id="KW-0378">Hydrolase</keyword>
<keyword id="KW-0464">Manganese</keyword>
<keyword id="KW-1185">Reference proteome</keyword>
<comment type="catalytic activity">
    <reaction evidence="1">
        <text>adenine + H2O + H(+) = hypoxanthine + NH4(+)</text>
        <dbReference type="Rhea" id="RHEA:23688"/>
        <dbReference type="ChEBI" id="CHEBI:15377"/>
        <dbReference type="ChEBI" id="CHEBI:15378"/>
        <dbReference type="ChEBI" id="CHEBI:16708"/>
        <dbReference type="ChEBI" id="CHEBI:17368"/>
        <dbReference type="ChEBI" id="CHEBI:28938"/>
        <dbReference type="EC" id="3.5.4.2"/>
    </reaction>
</comment>
<comment type="cofactor">
    <cofactor evidence="1">
        <name>Mn(2+)</name>
        <dbReference type="ChEBI" id="CHEBI:29035"/>
    </cofactor>
</comment>
<comment type="similarity">
    <text evidence="1">Belongs to the metallo-dependent hydrolases superfamily. Adenine deaminase family.</text>
</comment>
<feature type="chain" id="PRO_0000292392" description="Adenine deaminase 1">
    <location>
        <begin position="1"/>
        <end position="565"/>
    </location>
</feature>
<gene>
    <name evidence="1" type="primary">ade1</name>
    <name type="synonym">adeC1</name>
    <name type="ordered locus">RHE_CH03094</name>
</gene>
<name>ADEC1_RHIEC</name>
<sequence length="565" mass="60708">MTTKLERLIDQGVGRIPADIVLKGGSFFDLVTGEIVRSDIAIGADRIVGTSGDYRGETEIDISGRTVVPGFIDTHLHIESSLVTPHEFDRCVLPYGVTTAICDPHEIANVLGTEGIEFFLESALETIMDIRVQLSSCVPATHLETAGADLPIERLLPFRDHPKVIGLAEFMNFPGVIHKDSVCMAKLDAFQGGHIDGHAPLLSGNDLNGYLSAGIRTEHECTSAAEALEKIRKGMHILVREGSVSKDLAALIPIITERLSPYLALCTDDRNPLDIAEQGHLDHMIRTAMASGVEPLAIYRAASISAARAFGLRDRGLVAPGWRADLVVLDSLQSCRAEMVFSAGRRVSDALFATRKPVAPIGLDSVKARPVNAAHFGVPVAEGETSVIGVMPGKIITEHRRYRLPAKGNETTVDLTNDIIKVAVIERHGKNGNHANGFVQGFGLKKGAIASTVGHDSHNICVVGVNEDDMAYAANRLGEIKGGFVVVEDGKITGEIALPVAGLMSIEPYETVRDTLHHLRQAALALGATLHEPFLQLAFLPLPVIPHLKISDRGMVDVDKFALIG</sequence>